<comment type="function">
    <text evidence="1">Component of the cytosolic iron-sulfur (Fe-S) protein assembly (CIA) machinery. Required for the maturation of extramitochondrial Fe-S proteins. Part of an electron transfer chain functioning in an early step of cytosolic Fe-S biogenesis, facilitating the de novo assembly of a [4Fe-4S] cluster on the cytosolic Fe-S scaffold complex. Electrons are transferred from NADPH via a FAD- and FMN-containing diflavin oxidoreductase. Together with the diflavin oxidoreductase, also required for the assembly of the diferric tyrosyl radical cofactor of ribonucleotide reductase (RNR), probably by providing electrons for reduction during radical cofactor maturation in the catalytic small subunit.</text>
</comment>
<comment type="cofactor">
    <cofactor evidence="1">
        <name>[2Fe-2S] cluster</name>
        <dbReference type="ChEBI" id="CHEBI:190135"/>
    </cofactor>
</comment>
<comment type="cofactor">
    <cofactor evidence="1">
        <name>[4Fe-4S] cluster</name>
        <dbReference type="ChEBI" id="CHEBI:49883"/>
    </cofactor>
</comment>
<comment type="subunit">
    <text evidence="1">Monomer.</text>
</comment>
<comment type="subcellular location">
    <subcellularLocation>
        <location evidence="1">Cytoplasm</location>
    </subcellularLocation>
    <subcellularLocation>
        <location evidence="1">Mitochondrion intermembrane space</location>
    </subcellularLocation>
</comment>
<comment type="domain">
    <text evidence="1">The C-terminal domain binds 2 Fe-S clusters but is otherwise mostly in an intrinsically disordered conformation.</text>
</comment>
<comment type="domain">
    <text evidence="1">The N-terminal domain has structural similarity with S-adenosyl-L-methionine-dependent methyltransferases, but does not bind S-adenosyl-L-methionine. It is required for correct assembly of the 2 Fe-S clusters.</text>
</comment>
<comment type="domain">
    <text evidence="1">The twin Cx2C motifs are involved in the recognition by the mitochondrial MIA40-ERV1 disulfide relay system. The formation of 2 disulfide bonds in the Cx2C motifs through dithiol/disulfide exchange reactions effectively traps the protein in the mitochondrial intermembrane space.</text>
</comment>
<comment type="similarity">
    <text evidence="1">Belongs to the anamorsin family.</text>
</comment>
<comment type="sequence caution" evidence="2">
    <conflict type="erroneous initiation">
        <sequence resource="EMBL-CDS" id="ABO93958"/>
    </conflict>
</comment>
<name>DRE2_OSTLU</name>
<gene>
    <name type="ORF">OSTLU_29219</name>
</gene>
<sequence>MSVLALDVARDVAAPRRAEILETLRALADGADATTREIASDDDADALERASCDAYFARARDASEARRACARASEKLRAGGALGVVVDDERTATATTEAMVLAGFTTVTREDDGVVRCVKPNWARGTAFALKSRAVRVNATAADAADAWGASAAADDDELIDESALLTELDVNTAPVKYDDCDVGAGKKACKNCTCGRAEAEAAEEATTAASEETFVSACGNCALGDAFRCAGCPYLGQPAFKDQPGTKVELDLGDDL</sequence>
<keyword id="KW-0001">2Fe-2S</keyword>
<keyword id="KW-0004">4Fe-4S</keyword>
<keyword id="KW-0963">Cytoplasm</keyword>
<keyword id="KW-0408">Iron</keyword>
<keyword id="KW-0411">Iron-sulfur</keyword>
<keyword id="KW-0479">Metal-binding</keyword>
<keyword id="KW-0496">Mitochondrion</keyword>
<keyword id="KW-1185">Reference proteome</keyword>
<protein>
    <recommendedName>
        <fullName evidence="1">Anamorsin homolog</fullName>
    </recommendedName>
    <alternativeName>
        <fullName evidence="1">Fe-S cluster assembly protein DRE2 homolog</fullName>
    </alternativeName>
</protein>
<dbReference type="EMBL" id="CP000581">
    <property type="protein sequence ID" value="ABO93958.1"/>
    <property type="status" value="ALT_INIT"/>
    <property type="molecule type" value="Genomic_DNA"/>
</dbReference>
<dbReference type="RefSeq" id="XP_001415666.1">
    <property type="nucleotide sequence ID" value="XM_001415629.1"/>
</dbReference>
<dbReference type="STRING" id="436017.A4RS24"/>
<dbReference type="GeneID" id="4999720"/>
<dbReference type="KEGG" id="olu:OSTLU_29219"/>
<dbReference type="eggNOG" id="KOG4020">
    <property type="taxonomic scope" value="Eukaryota"/>
</dbReference>
<dbReference type="HOGENOM" id="CLU_1663658_0_0_1"/>
<dbReference type="OrthoDB" id="497990at2759"/>
<dbReference type="Proteomes" id="UP000001568">
    <property type="component" value="Chromosome 1"/>
</dbReference>
<dbReference type="GO" id="GO:0005758">
    <property type="term" value="C:mitochondrial intermembrane space"/>
    <property type="evidence" value="ECO:0007669"/>
    <property type="project" value="UniProtKB-SubCell"/>
</dbReference>
<dbReference type="GO" id="GO:0051537">
    <property type="term" value="F:2 iron, 2 sulfur cluster binding"/>
    <property type="evidence" value="ECO:0007669"/>
    <property type="project" value="UniProtKB-UniRule"/>
</dbReference>
<dbReference type="GO" id="GO:0051539">
    <property type="term" value="F:4 iron, 4 sulfur cluster binding"/>
    <property type="evidence" value="ECO:0007669"/>
    <property type="project" value="UniProtKB-KW"/>
</dbReference>
<dbReference type="GO" id="GO:0009055">
    <property type="term" value="F:electron transfer activity"/>
    <property type="evidence" value="ECO:0007669"/>
    <property type="project" value="UniProtKB-UniRule"/>
</dbReference>
<dbReference type="GO" id="GO:0046872">
    <property type="term" value="F:metal ion binding"/>
    <property type="evidence" value="ECO:0007669"/>
    <property type="project" value="UniProtKB-KW"/>
</dbReference>
<dbReference type="GO" id="GO:0016226">
    <property type="term" value="P:iron-sulfur cluster assembly"/>
    <property type="evidence" value="ECO:0007669"/>
    <property type="project" value="UniProtKB-UniRule"/>
</dbReference>
<dbReference type="HAMAP" id="MF_03115">
    <property type="entry name" value="Anamorsin"/>
    <property type="match status" value="1"/>
</dbReference>
<dbReference type="InterPro" id="IPR007785">
    <property type="entry name" value="Anamorsin"/>
</dbReference>
<dbReference type="InterPro" id="IPR046408">
    <property type="entry name" value="CIAPIN1"/>
</dbReference>
<dbReference type="PANTHER" id="PTHR13273">
    <property type="entry name" value="ANAMORSIN"/>
    <property type="match status" value="1"/>
</dbReference>
<dbReference type="PANTHER" id="PTHR13273:SF14">
    <property type="entry name" value="ANAMORSIN"/>
    <property type="match status" value="1"/>
</dbReference>
<dbReference type="Pfam" id="PF05093">
    <property type="entry name" value="CIAPIN1"/>
    <property type="match status" value="1"/>
</dbReference>
<accession>A4RS24</accession>
<evidence type="ECO:0000255" key="1">
    <source>
        <dbReference type="HAMAP-Rule" id="MF_03115"/>
    </source>
</evidence>
<evidence type="ECO:0000305" key="2"/>
<proteinExistence type="inferred from homology"/>
<organism>
    <name type="scientific">Ostreococcus lucimarinus (strain CCE9901)</name>
    <dbReference type="NCBI Taxonomy" id="436017"/>
    <lineage>
        <taxon>Eukaryota</taxon>
        <taxon>Viridiplantae</taxon>
        <taxon>Chlorophyta</taxon>
        <taxon>Mamiellophyceae</taxon>
        <taxon>Mamiellales</taxon>
        <taxon>Bathycoccaceae</taxon>
        <taxon>Ostreococcus</taxon>
    </lineage>
</organism>
<feature type="chain" id="PRO_0000392340" description="Anamorsin homolog">
    <location>
        <begin position="1"/>
        <end position="257"/>
    </location>
</feature>
<feature type="region of interest" description="N-terminal SAM-like domain" evidence="1">
    <location>
        <begin position="1"/>
        <end position="132"/>
    </location>
</feature>
<feature type="region of interest" description="Linker" evidence="1">
    <location>
        <begin position="133"/>
        <end position="171"/>
    </location>
</feature>
<feature type="region of interest" description="Fe-S binding site A" evidence="1">
    <location>
        <begin position="181"/>
        <end position="195"/>
    </location>
</feature>
<feature type="region of interest" description="Fe-S binding site B" evidence="1">
    <location>
        <begin position="219"/>
        <end position="233"/>
    </location>
</feature>
<feature type="short sequence motif" description="Cx2C motif 1" evidence="1">
    <location>
        <begin position="219"/>
        <end position="222"/>
    </location>
</feature>
<feature type="short sequence motif" description="Cx2C motif 2" evidence="1">
    <location>
        <begin position="230"/>
        <end position="233"/>
    </location>
</feature>
<feature type="binding site" evidence="1">
    <location>
        <position position="181"/>
    </location>
    <ligand>
        <name>[2Fe-2S] cluster</name>
        <dbReference type="ChEBI" id="CHEBI:190135"/>
    </ligand>
</feature>
<feature type="binding site" evidence="1">
    <location>
        <position position="190"/>
    </location>
    <ligand>
        <name>[2Fe-2S] cluster</name>
        <dbReference type="ChEBI" id="CHEBI:190135"/>
    </ligand>
</feature>
<feature type="binding site" evidence="1">
    <location>
        <position position="193"/>
    </location>
    <ligand>
        <name>[2Fe-2S] cluster</name>
        <dbReference type="ChEBI" id="CHEBI:190135"/>
    </ligand>
</feature>
<feature type="binding site" evidence="1">
    <location>
        <position position="195"/>
    </location>
    <ligand>
        <name>[2Fe-2S] cluster</name>
        <dbReference type="ChEBI" id="CHEBI:190135"/>
    </ligand>
</feature>
<feature type="binding site" evidence="1">
    <location>
        <position position="219"/>
    </location>
    <ligand>
        <name>[4Fe-4S] cluster</name>
        <dbReference type="ChEBI" id="CHEBI:49883"/>
    </ligand>
</feature>
<feature type="binding site" evidence="1">
    <location>
        <position position="222"/>
    </location>
    <ligand>
        <name>[4Fe-4S] cluster</name>
        <dbReference type="ChEBI" id="CHEBI:49883"/>
    </ligand>
</feature>
<feature type="binding site" evidence="1">
    <location>
        <position position="230"/>
    </location>
    <ligand>
        <name>[4Fe-4S] cluster</name>
        <dbReference type="ChEBI" id="CHEBI:49883"/>
    </ligand>
</feature>
<feature type="binding site" evidence="1">
    <location>
        <position position="233"/>
    </location>
    <ligand>
        <name>[4Fe-4S] cluster</name>
        <dbReference type="ChEBI" id="CHEBI:49883"/>
    </ligand>
</feature>
<reference key="1">
    <citation type="journal article" date="2007" name="Proc. Natl. Acad. Sci. U.S.A.">
        <title>The tiny eukaryote Ostreococcus provides genomic insights into the paradox of plankton speciation.</title>
        <authorList>
            <person name="Palenik B."/>
            <person name="Grimwood J."/>
            <person name="Aerts A."/>
            <person name="Rouze P."/>
            <person name="Salamov A."/>
            <person name="Putnam N."/>
            <person name="Dupont C."/>
            <person name="Jorgensen R."/>
            <person name="Derelle E."/>
            <person name="Rombauts S."/>
            <person name="Zhou K."/>
            <person name="Otillar R."/>
            <person name="Merchant S.S."/>
            <person name="Podell S."/>
            <person name="Gaasterland T."/>
            <person name="Napoli C."/>
            <person name="Gendler K."/>
            <person name="Manuell A."/>
            <person name="Tai V."/>
            <person name="Vallon O."/>
            <person name="Piganeau G."/>
            <person name="Jancek S."/>
            <person name="Heijde M."/>
            <person name="Jabbari K."/>
            <person name="Bowler C."/>
            <person name="Lohr M."/>
            <person name="Robbens S."/>
            <person name="Werner G."/>
            <person name="Dubchak I."/>
            <person name="Pazour G.J."/>
            <person name="Ren Q."/>
            <person name="Paulsen I."/>
            <person name="Delwiche C."/>
            <person name="Schmutz J."/>
            <person name="Rokhsar D."/>
            <person name="Van de Peer Y."/>
            <person name="Moreau H."/>
            <person name="Grigoriev I.V."/>
        </authorList>
    </citation>
    <scope>NUCLEOTIDE SEQUENCE [LARGE SCALE GENOMIC DNA]</scope>
    <source>
        <strain>CCE9901</strain>
    </source>
</reference>